<name>PYRG_SHOC1</name>
<proteinExistence type="inferred from homology"/>
<feature type="chain" id="PRO_0000266060" description="CTP synthase">
    <location>
        <begin position="1"/>
        <end position="534"/>
    </location>
</feature>
<feature type="domain" description="Glutamine amidotransferase type-1" evidence="1">
    <location>
        <begin position="293"/>
        <end position="534"/>
    </location>
</feature>
<feature type="region of interest" description="Amidoligase domain" evidence="1">
    <location>
        <begin position="1"/>
        <end position="268"/>
    </location>
</feature>
<feature type="active site" description="Nucleophile; for glutamine hydrolysis" evidence="1">
    <location>
        <position position="382"/>
    </location>
</feature>
<feature type="active site" evidence="1">
    <location>
        <position position="508"/>
    </location>
</feature>
<feature type="active site" evidence="1">
    <location>
        <position position="510"/>
    </location>
</feature>
<feature type="binding site" evidence="1">
    <location>
        <position position="14"/>
    </location>
    <ligand>
        <name>CTP</name>
        <dbReference type="ChEBI" id="CHEBI:37563"/>
        <note>allosteric inhibitor</note>
    </ligand>
</feature>
<feature type="binding site" evidence="1">
    <location>
        <position position="14"/>
    </location>
    <ligand>
        <name>UTP</name>
        <dbReference type="ChEBI" id="CHEBI:46398"/>
    </ligand>
</feature>
<feature type="binding site" evidence="1">
    <location>
        <begin position="15"/>
        <end position="20"/>
    </location>
    <ligand>
        <name>ATP</name>
        <dbReference type="ChEBI" id="CHEBI:30616"/>
    </ligand>
</feature>
<feature type="binding site" evidence="1">
    <location>
        <position position="55"/>
    </location>
    <ligand>
        <name>L-glutamine</name>
        <dbReference type="ChEBI" id="CHEBI:58359"/>
    </ligand>
</feature>
<feature type="binding site" evidence="1">
    <location>
        <position position="72"/>
    </location>
    <ligand>
        <name>ATP</name>
        <dbReference type="ChEBI" id="CHEBI:30616"/>
    </ligand>
</feature>
<feature type="binding site" evidence="1">
    <location>
        <position position="72"/>
    </location>
    <ligand>
        <name>Mg(2+)</name>
        <dbReference type="ChEBI" id="CHEBI:18420"/>
    </ligand>
</feature>
<feature type="binding site" evidence="1">
    <location>
        <position position="142"/>
    </location>
    <ligand>
        <name>Mg(2+)</name>
        <dbReference type="ChEBI" id="CHEBI:18420"/>
    </ligand>
</feature>
<feature type="binding site" evidence="1">
    <location>
        <begin position="149"/>
        <end position="151"/>
    </location>
    <ligand>
        <name>CTP</name>
        <dbReference type="ChEBI" id="CHEBI:37563"/>
        <note>allosteric inhibitor</note>
    </ligand>
</feature>
<feature type="binding site" evidence="1">
    <location>
        <begin position="189"/>
        <end position="194"/>
    </location>
    <ligand>
        <name>CTP</name>
        <dbReference type="ChEBI" id="CHEBI:37563"/>
        <note>allosteric inhibitor</note>
    </ligand>
</feature>
<feature type="binding site" evidence="1">
    <location>
        <begin position="189"/>
        <end position="194"/>
    </location>
    <ligand>
        <name>UTP</name>
        <dbReference type="ChEBI" id="CHEBI:46398"/>
    </ligand>
</feature>
<feature type="binding site" evidence="1">
    <location>
        <position position="225"/>
    </location>
    <ligand>
        <name>CTP</name>
        <dbReference type="ChEBI" id="CHEBI:37563"/>
        <note>allosteric inhibitor</note>
    </ligand>
</feature>
<feature type="binding site" evidence="1">
    <location>
        <position position="225"/>
    </location>
    <ligand>
        <name>UTP</name>
        <dbReference type="ChEBI" id="CHEBI:46398"/>
    </ligand>
</feature>
<feature type="binding site" evidence="1">
    <location>
        <position position="355"/>
    </location>
    <ligand>
        <name>L-glutamine</name>
        <dbReference type="ChEBI" id="CHEBI:58359"/>
    </ligand>
</feature>
<feature type="binding site" evidence="1">
    <location>
        <begin position="383"/>
        <end position="386"/>
    </location>
    <ligand>
        <name>L-glutamine</name>
        <dbReference type="ChEBI" id="CHEBI:58359"/>
    </ligand>
</feature>
<feature type="binding site" evidence="1">
    <location>
        <position position="406"/>
    </location>
    <ligand>
        <name>L-glutamine</name>
        <dbReference type="ChEBI" id="CHEBI:58359"/>
    </ligand>
</feature>
<feature type="binding site" evidence="1">
    <location>
        <position position="463"/>
    </location>
    <ligand>
        <name>L-glutamine</name>
        <dbReference type="ChEBI" id="CHEBI:58359"/>
    </ligand>
</feature>
<reference key="1">
    <citation type="submission" date="2003-10" db="EMBL/GenBank/DDBJ databases">
        <title>The complete genome sequence of the alkaliphilic Bacillus clausii KSM-K16.</title>
        <authorList>
            <person name="Takaki Y."/>
            <person name="Kageyama Y."/>
            <person name="Shimamura S."/>
            <person name="Suzuki H."/>
            <person name="Nishi S."/>
            <person name="Hatada Y."/>
            <person name="Kawai S."/>
            <person name="Ito S."/>
            <person name="Horikoshi K."/>
        </authorList>
    </citation>
    <scope>NUCLEOTIDE SEQUENCE [LARGE SCALE GENOMIC DNA]</scope>
    <source>
        <strain>KSM-K16</strain>
    </source>
</reference>
<sequence length="534" mass="59576">MAAKYIFVTGGVVSSLGKGITAASLGRLLKNRGLKVTIQKFDPYINVDPGTMSPYQHGEVFVTDDGAETDLDLGHYERFIDINLSQNSNITTGRVYSTVLKKERRGDYLGGTVQVIPHVTNEIKERVFRAGRETGADVVITEIGGTVGDIESLPFLEAIRQIKSDVGMENVLYLHCTLIPYLKAAGEMKSKPTQHSVKELRSLGIQPNVIVVRTERKVPQDMKDKIALFCDIKKEAVIEAWDADTLYQVPLDLQAQNLDQIVCDHLQLNCPEANMTEWKELVNRVSHLSEKVRIAIVGKYVELQDAYLSVAEALRHAGYHVDADIDIDWVYAEQVNDENVDELLNKADGILVPGGFGDRGIEGKITAIRYARENKVPFLGICLGMQLASVEFARTVLGLKGANSAELNPQTPYPIIDLLPEQKDVEDLGGTLRLGLYPCKLQEGTAARAAYGEEVVYERHRHRYEFNNEYREQMEKAGFVFSGTSPDGRLVEVIEVTDHPFFVASQFHPEFVSRPTRPQPLFREFVRNALAAQA</sequence>
<keyword id="KW-0067">ATP-binding</keyword>
<keyword id="KW-0315">Glutamine amidotransferase</keyword>
<keyword id="KW-0436">Ligase</keyword>
<keyword id="KW-0460">Magnesium</keyword>
<keyword id="KW-0479">Metal-binding</keyword>
<keyword id="KW-0547">Nucleotide-binding</keyword>
<keyword id="KW-0665">Pyrimidine biosynthesis</keyword>
<keyword id="KW-1185">Reference proteome</keyword>
<organism>
    <name type="scientific">Shouchella clausii (strain KSM-K16)</name>
    <name type="common">Alkalihalobacillus clausii</name>
    <dbReference type="NCBI Taxonomy" id="66692"/>
    <lineage>
        <taxon>Bacteria</taxon>
        <taxon>Bacillati</taxon>
        <taxon>Bacillota</taxon>
        <taxon>Bacilli</taxon>
        <taxon>Bacillales</taxon>
        <taxon>Bacillaceae</taxon>
        <taxon>Shouchella</taxon>
    </lineage>
</organism>
<dbReference type="EC" id="6.3.4.2" evidence="1"/>
<dbReference type="EMBL" id="AP006627">
    <property type="protein sequence ID" value="BAD66417.1"/>
    <property type="molecule type" value="Genomic_DNA"/>
</dbReference>
<dbReference type="RefSeq" id="WP_011248720.1">
    <property type="nucleotide sequence ID" value="NC_006582.1"/>
</dbReference>
<dbReference type="SMR" id="Q5WB43"/>
<dbReference type="STRING" id="66692.ABC3886"/>
<dbReference type="MEROPS" id="C26.964"/>
<dbReference type="KEGG" id="bcl:ABC3886"/>
<dbReference type="eggNOG" id="COG0504">
    <property type="taxonomic scope" value="Bacteria"/>
</dbReference>
<dbReference type="HOGENOM" id="CLU_011675_5_0_9"/>
<dbReference type="OrthoDB" id="9801107at2"/>
<dbReference type="UniPathway" id="UPA00159">
    <property type="reaction ID" value="UER00277"/>
</dbReference>
<dbReference type="Proteomes" id="UP000001168">
    <property type="component" value="Chromosome"/>
</dbReference>
<dbReference type="GO" id="GO:0005829">
    <property type="term" value="C:cytosol"/>
    <property type="evidence" value="ECO:0007669"/>
    <property type="project" value="TreeGrafter"/>
</dbReference>
<dbReference type="GO" id="GO:0005524">
    <property type="term" value="F:ATP binding"/>
    <property type="evidence" value="ECO:0007669"/>
    <property type="project" value="UniProtKB-KW"/>
</dbReference>
<dbReference type="GO" id="GO:0003883">
    <property type="term" value="F:CTP synthase activity"/>
    <property type="evidence" value="ECO:0007669"/>
    <property type="project" value="UniProtKB-UniRule"/>
</dbReference>
<dbReference type="GO" id="GO:0004359">
    <property type="term" value="F:glutaminase activity"/>
    <property type="evidence" value="ECO:0007669"/>
    <property type="project" value="RHEA"/>
</dbReference>
<dbReference type="GO" id="GO:0042802">
    <property type="term" value="F:identical protein binding"/>
    <property type="evidence" value="ECO:0007669"/>
    <property type="project" value="TreeGrafter"/>
</dbReference>
<dbReference type="GO" id="GO:0046872">
    <property type="term" value="F:metal ion binding"/>
    <property type="evidence" value="ECO:0007669"/>
    <property type="project" value="UniProtKB-KW"/>
</dbReference>
<dbReference type="GO" id="GO:0044210">
    <property type="term" value="P:'de novo' CTP biosynthetic process"/>
    <property type="evidence" value="ECO:0007669"/>
    <property type="project" value="UniProtKB-UniRule"/>
</dbReference>
<dbReference type="GO" id="GO:0019856">
    <property type="term" value="P:pyrimidine nucleobase biosynthetic process"/>
    <property type="evidence" value="ECO:0007669"/>
    <property type="project" value="TreeGrafter"/>
</dbReference>
<dbReference type="CDD" id="cd03113">
    <property type="entry name" value="CTPS_N"/>
    <property type="match status" value="1"/>
</dbReference>
<dbReference type="CDD" id="cd01746">
    <property type="entry name" value="GATase1_CTP_Synthase"/>
    <property type="match status" value="1"/>
</dbReference>
<dbReference type="FunFam" id="3.40.50.300:FF:000009">
    <property type="entry name" value="CTP synthase"/>
    <property type="match status" value="1"/>
</dbReference>
<dbReference type="FunFam" id="3.40.50.880:FF:000002">
    <property type="entry name" value="CTP synthase"/>
    <property type="match status" value="1"/>
</dbReference>
<dbReference type="Gene3D" id="3.40.50.880">
    <property type="match status" value="1"/>
</dbReference>
<dbReference type="Gene3D" id="3.40.50.300">
    <property type="entry name" value="P-loop containing nucleotide triphosphate hydrolases"/>
    <property type="match status" value="1"/>
</dbReference>
<dbReference type="HAMAP" id="MF_01227">
    <property type="entry name" value="PyrG"/>
    <property type="match status" value="1"/>
</dbReference>
<dbReference type="InterPro" id="IPR029062">
    <property type="entry name" value="Class_I_gatase-like"/>
</dbReference>
<dbReference type="InterPro" id="IPR004468">
    <property type="entry name" value="CTP_synthase"/>
</dbReference>
<dbReference type="InterPro" id="IPR017456">
    <property type="entry name" value="CTP_synthase_N"/>
</dbReference>
<dbReference type="InterPro" id="IPR017926">
    <property type="entry name" value="GATASE"/>
</dbReference>
<dbReference type="InterPro" id="IPR033828">
    <property type="entry name" value="GATase1_CTP_Synthase"/>
</dbReference>
<dbReference type="InterPro" id="IPR027417">
    <property type="entry name" value="P-loop_NTPase"/>
</dbReference>
<dbReference type="NCBIfam" id="NF003792">
    <property type="entry name" value="PRK05380.1"/>
    <property type="match status" value="1"/>
</dbReference>
<dbReference type="NCBIfam" id="TIGR00337">
    <property type="entry name" value="PyrG"/>
    <property type="match status" value="1"/>
</dbReference>
<dbReference type="PANTHER" id="PTHR11550">
    <property type="entry name" value="CTP SYNTHASE"/>
    <property type="match status" value="1"/>
</dbReference>
<dbReference type="PANTHER" id="PTHR11550:SF0">
    <property type="entry name" value="CTP SYNTHASE-RELATED"/>
    <property type="match status" value="1"/>
</dbReference>
<dbReference type="Pfam" id="PF06418">
    <property type="entry name" value="CTP_synth_N"/>
    <property type="match status" value="1"/>
</dbReference>
<dbReference type="Pfam" id="PF00117">
    <property type="entry name" value="GATase"/>
    <property type="match status" value="1"/>
</dbReference>
<dbReference type="SUPFAM" id="SSF52317">
    <property type="entry name" value="Class I glutamine amidotransferase-like"/>
    <property type="match status" value="1"/>
</dbReference>
<dbReference type="SUPFAM" id="SSF52540">
    <property type="entry name" value="P-loop containing nucleoside triphosphate hydrolases"/>
    <property type="match status" value="1"/>
</dbReference>
<dbReference type="PROSITE" id="PS51273">
    <property type="entry name" value="GATASE_TYPE_1"/>
    <property type="match status" value="1"/>
</dbReference>
<evidence type="ECO:0000255" key="1">
    <source>
        <dbReference type="HAMAP-Rule" id="MF_01227"/>
    </source>
</evidence>
<protein>
    <recommendedName>
        <fullName evidence="1">CTP synthase</fullName>
        <ecNumber evidence="1">6.3.4.2</ecNumber>
    </recommendedName>
    <alternativeName>
        <fullName evidence="1">Cytidine 5'-triphosphate synthase</fullName>
    </alternativeName>
    <alternativeName>
        <fullName evidence="1">Cytidine triphosphate synthetase</fullName>
        <shortName evidence="1">CTP synthetase</shortName>
        <shortName evidence="1">CTPS</shortName>
    </alternativeName>
    <alternativeName>
        <fullName evidence="1">UTP--ammonia ligase</fullName>
    </alternativeName>
</protein>
<gene>
    <name evidence="1" type="primary">pyrG</name>
    <name type="ordered locus">ABC3886</name>
</gene>
<comment type="function">
    <text evidence="1">Catalyzes the ATP-dependent amination of UTP to CTP with either L-glutamine or ammonia as the source of nitrogen. Regulates intracellular CTP levels through interactions with the four ribonucleotide triphosphates.</text>
</comment>
<comment type="catalytic activity">
    <reaction evidence="1">
        <text>UTP + L-glutamine + ATP + H2O = CTP + L-glutamate + ADP + phosphate + 2 H(+)</text>
        <dbReference type="Rhea" id="RHEA:26426"/>
        <dbReference type="ChEBI" id="CHEBI:15377"/>
        <dbReference type="ChEBI" id="CHEBI:15378"/>
        <dbReference type="ChEBI" id="CHEBI:29985"/>
        <dbReference type="ChEBI" id="CHEBI:30616"/>
        <dbReference type="ChEBI" id="CHEBI:37563"/>
        <dbReference type="ChEBI" id="CHEBI:43474"/>
        <dbReference type="ChEBI" id="CHEBI:46398"/>
        <dbReference type="ChEBI" id="CHEBI:58359"/>
        <dbReference type="ChEBI" id="CHEBI:456216"/>
        <dbReference type="EC" id="6.3.4.2"/>
    </reaction>
</comment>
<comment type="catalytic activity">
    <reaction evidence="1">
        <text>L-glutamine + H2O = L-glutamate + NH4(+)</text>
        <dbReference type="Rhea" id="RHEA:15889"/>
        <dbReference type="ChEBI" id="CHEBI:15377"/>
        <dbReference type="ChEBI" id="CHEBI:28938"/>
        <dbReference type="ChEBI" id="CHEBI:29985"/>
        <dbReference type="ChEBI" id="CHEBI:58359"/>
    </reaction>
</comment>
<comment type="catalytic activity">
    <reaction evidence="1">
        <text>UTP + NH4(+) + ATP = CTP + ADP + phosphate + 2 H(+)</text>
        <dbReference type="Rhea" id="RHEA:16597"/>
        <dbReference type="ChEBI" id="CHEBI:15378"/>
        <dbReference type="ChEBI" id="CHEBI:28938"/>
        <dbReference type="ChEBI" id="CHEBI:30616"/>
        <dbReference type="ChEBI" id="CHEBI:37563"/>
        <dbReference type="ChEBI" id="CHEBI:43474"/>
        <dbReference type="ChEBI" id="CHEBI:46398"/>
        <dbReference type="ChEBI" id="CHEBI:456216"/>
    </reaction>
</comment>
<comment type="activity regulation">
    <text evidence="1">Allosterically activated by GTP, when glutamine is the substrate; GTP has no effect on the reaction when ammonia is the substrate. The allosteric effector GTP functions by stabilizing the protein conformation that binds the tetrahedral intermediate(s) formed during glutamine hydrolysis. Inhibited by the product CTP, via allosteric rather than competitive inhibition.</text>
</comment>
<comment type="pathway">
    <text evidence="1">Pyrimidine metabolism; CTP biosynthesis via de novo pathway; CTP from UDP: step 2/2.</text>
</comment>
<comment type="subunit">
    <text evidence="1">Homotetramer.</text>
</comment>
<comment type="miscellaneous">
    <text evidence="1">CTPSs have evolved a hybrid strategy for distinguishing between UTP and CTP. The overlapping regions of the product feedback inhibitory and substrate sites recognize a common feature in both compounds, the triphosphate moiety. To differentiate isosteric substrate and product pyrimidine rings, an additional pocket far from the expected kinase/ligase catalytic site, specifically recognizes the cytosine and ribose portions of the product inhibitor.</text>
</comment>
<comment type="similarity">
    <text evidence="1">Belongs to the CTP synthase family.</text>
</comment>
<accession>Q5WB43</accession>